<feature type="chain" id="PRO_0000172751" description="Chitooligosaccharide deacetylase">
    <location>
        <begin position="1"/>
        <end position="219"/>
    </location>
</feature>
<feature type="domain" description="NodB homology" evidence="2">
    <location>
        <begin position="21"/>
        <end position="213"/>
    </location>
</feature>
<feature type="active site" description="Proton acceptor" evidence="1">
    <location>
        <position position="28"/>
    </location>
</feature>
<feature type="active site" description="Proton donor" evidence="1">
    <location>
        <position position="174"/>
    </location>
</feature>
<feature type="binding site" evidence="1">
    <location>
        <position position="79"/>
    </location>
    <ligand>
        <name>a divalent metal cation</name>
        <dbReference type="ChEBI" id="CHEBI:60240"/>
    </ligand>
</feature>
<feature type="binding site" evidence="1">
    <location>
        <position position="83"/>
    </location>
    <ligand>
        <name>a divalent metal cation</name>
        <dbReference type="ChEBI" id="CHEBI:60240"/>
    </ligand>
</feature>
<feature type="site" description="Raises pKa of active site His" evidence="1">
    <location>
        <position position="148"/>
    </location>
</feature>
<feature type="sequence conflict" description="In Ref. 2; CAA46575." evidence="3" ref="2">
    <original>KV</original>
    <variation>EA</variation>
    <location>
        <begin position="9"/>
        <end position="10"/>
    </location>
</feature>
<sequence>MRRLDDRWKVQSECADGTGRRSVYLTFDDGPNPCFTPQILDVLAQNRVPATFFVIGAYAAEHPELIQRMIAEGHEVGNHTMSHPDLSKCGLGEVQREVFEANQAIMLACPQASIRYIRAPYGAWSEEVFTASEIAGLAALHWSIDPRDWSRPGTDAIVDAVLASVRPGAIVLLHDGCPPDESTRSTQASLRNQTVMALSNLIPALDACGYEIRSLPEHH</sequence>
<protein>
    <recommendedName>
        <fullName>Chitooligosaccharide deacetylase</fullName>
        <ecNumber>3.5.1.-</ecNumber>
    </recommendedName>
    <alternativeName>
        <fullName>Nodulation protein B</fullName>
    </alternativeName>
</protein>
<keyword id="KW-0963">Cytoplasm</keyword>
<keyword id="KW-0378">Hydrolase</keyword>
<keyword id="KW-0479">Metal-binding</keyword>
<keyword id="KW-0536">Nodulation</keyword>
<evidence type="ECO:0000250" key="1"/>
<evidence type="ECO:0000255" key="2">
    <source>
        <dbReference type="PROSITE-ProRule" id="PRU01014"/>
    </source>
</evidence>
<evidence type="ECO:0000305" key="3"/>
<dbReference type="EC" id="3.5.1.-"/>
<dbReference type="EMBL" id="BA000012">
    <property type="protein sequence ID" value="BAB52508.1"/>
    <property type="molecule type" value="Genomic_DNA"/>
</dbReference>
<dbReference type="EMBL" id="X65620">
    <property type="protein sequence ID" value="CAA46575.1"/>
    <property type="molecule type" value="Genomic_DNA"/>
</dbReference>
<dbReference type="PIR" id="S21412">
    <property type="entry name" value="S21412"/>
</dbReference>
<dbReference type="RefSeq" id="WP_010913829.1">
    <property type="nucleotide sequence ID" value="NC_002678.2"/>
</dbReference>
<dbReference type="SMR" id="Q52845"/>
<dbReference type="KEGG" id="mlo:mlr6175"/>
<dbReference type="eggNOG" id="COG0726">
    <property type="taxonomic scope" value="Bacteria"/>
</dbReference>
<dbReference type="HOGENOM" id="CLU_021264_0_1_5"/>
<dbReference type="Proteomes" id="UP000000552">
    <property type="component" value="Chromosome"/>
</dbReference>
<dbReference type="GO" id="GO:0005737">
    <property type="term" value="C:cytoplasm"/>
    <property type="evidence" value="ECO:0007669"/>
    <property type="project" value="UniProtKB-SubCell"/>
</dbReference>
<dbReference type="GO" id="GO:0016020">
    <property type="term" value="C:membrane"/>
    <property type="evidence" value="ECO:0007669"/>
    <property type="project" value="TreeGrafter"/>
</dbReference>
<dbReference type="GO" id="GO:0016810">
    <property type="term" value="F:hydrolase activity, acting on carbon-nitrogen (but not peptide) bonds"/>
    <property type="evidence" value="ECO:0007669"/>
    <property type="project" value="InterPro"/>
</dbReference>
<dbReference type="GO" id="GO:0046872">
    <property type="term" value="F:metal ion binding"/>
    <property type="evidence" value="ECO:0007669"/>
    <property type="project" value="UniProtKB-KW"/>
</dbReference>
<dbReference type="GO" id="GO:0005975">
    <property type="term" value="P:carbohydrate metabolic process"/>
    <property type="evidence" value="ECO:0007669"/>
    <property type="project" value="InterPro"/>
</dbReference>
<dbReference type="CDD" id="cd10943">
    <property type="entry name" value="CE4_NodB"/>
    <property type="match status" value="1"/>
</dbReference>
<dbReference type="Gene3D" id="3.20.20.370">
    <property type="entry name" value="Glycoside hydrolase/deacetylase"/>
    <property type="match status" value="1"/>
</dbReference>
<dbReference type="InterPro" id="IPR011330">
    <property type="entry name" value="Glyco_hydro/deAcase_b/a-brl"/>
</dbReference>
<dbReference type="InterPro" id="IPR002509">
    <property type="entry name" value="NODB_dom"/>
</dbReference>
<dbReference type="InterPro" id="IPR026402">
    <property type="entry name" value="Nodulat_NodB"/>
</dbReference>
<dbReference type="InterPro" id="IPR050248">
    <property type="entry name" value="Polysacc_deacetylase_ArnD"/>
</dbReference>
<dbReference type="NCBIfam" id="TIGR04243">
    <property type="entry name" value="nodulat_NodB"/>
    <property type="match status" value="1"/>
</dbReference>
<dbReference type="PANTHER" id="PTHR10587:SF133">
    <property type="entry name" value="CHITIN DEACETYLASE 1-RELATED"/>
    <property type="match status" value="1"/>
</dbReference>
<dbReference type="PANTHER" id="PTHR10587">
    <property type="entry name" value="GLYCOSYL TRANSFERASE-RELATED"/>
    <property type="match status" value="1"/>
</dbReference>
<dbReference type="Pfam" id="PF01522">
    <property type="entry name" value="Polysacc_deac_1"/>
    <property type="match status" value="1"/>
</dbReference>
<dbReference type="SUPFAM" id="SSF88713">
    <property type="entry name" value="Glycoside hydrolase/deacetylase"/>
    <property type="match status" value="1"/>
</dbReference>
<dbReference type="PROSITE" id="PS51677">
    <property type="entry name" value="NODB"/>
    <property type="match status" value="1"/>
</dbReference>
<name>NODB_RHILO</name>
<accession>Q52845</accession>
<reference key="1">
    <citation type="journal article" date="2000" name="DNA Res.">
        <title>Complete genome structure of the nitrogen-fixing symbiotic bacterium Mesorhizobium loti.</title>
        <authorList>
            <person name="Kaneko T."/>
            <person name="Nakamura Y."/>
            <person name="Sato S."/>
            <person name="Asamizu E."/>
            <person name="Kato T."/>
            <person name="Sasamoto S."/>
            <person name="Watanabe A."/>
            <person name="Idesawa K."/>
            <person name="Ishikawa A."/>
            <person name="Kawashima K."/>
            <person name="Kimura T."/>
            <person name="Kishida Y."/>
            <person name="Kiyokawa C."/>
            <person name="Kohara M."/>
            <person name="Matsumoto M."/>
            <person name="Matsuno A."/>
            <person name="Mochizuki Y."/>
            <person name="Nakayama S."/>
            <person name="Nakazaki N."/>
            <person name="Shimpo S."/>
            <person name="Sugimoto M."/>
            <person name="Takeuchi C."/>
            <person name="Yamada M."/>
            <person name="Tabata S."/>
        </authorList>
    </citation>
    <scope>NUCLEOTIDE SEQUENCE [LARGE SCALE GENOMIC DNA]</scope>
    <source>
        <strain>LMG 29417 / CECT 9101 / MAFF 303099</strain>
    </source>
</reference>
<reference key="2">
    <citation type="journal article" date="1996" name="Mol. Plant Microbe Interact.">
        <title>Novel and complex chromosomal arrangement of Rhizobium loti nodulation genes.</title>
        <authorList>
            <person name="Scott D.B."/>
            <person name="Young C.A."/>
            <person name="Collins-Emerson J.M."/>
            <person name="Terzaghi E.A."/>
            <person name="Rockman E.S."/>
            <person name="Lewis P.E."/>
            <person name="Pankhurst C.E."/>
        </authorList>
    </citation>
    <scope>NUCLEOTIDE SEQUENCE [GENOMIC DNA] OF 1-52</scope>
    <source>
        <strain>NZP 2213</strain>
    </source>
</reference>
<proteinExistence type="inferred from homology"/>
<organism>
    <name type="scientific">Mesorhizobium japonicum (strain LMG 29417 / CECT 9101 / MAFF 303099)</name>
    <name type="common">Mesorhizobium loti (strain MAFF 303099)</name>
    <dbReference type="NCBI Taxonomy" id="266835"/>
    <lineage>
        <taxon>Bacteria</taxon>
        <taxon>Pseudomonadati</taxon>
        <taxon>Pseudomonadota</taxon>
        <taxon>Alphaproteobacteria</taxon>
        <taxon>Hyphomicrobiales</taxon>
        <taxon>Phyllobacteriaceae</taxon>
        <taxon>Mesorhizobium</taxon>
    </lineage>
</organism>
<gene>
    <name type="primary">nodB</name>
    <name type="ordered locus">mlr6175</name>
</gene>
<comment type="function">
    <text>Is involved in generating a small heat-stable compound (Nod), an acylated oligomer of N-acetylglucosamine, that stimulates mitosis in various plant protoplasts.</text>
</comment>
<comment type="subcellular location">
    <subcellularLocation>
        <location>Cytoplasm</location>
    </subcellularLocation>
</comment>
<comment type="similarity">
    <text evidence="3">Belongs to the polysaccharide deacetylase family.</text>
</comment>